<accession>Q4WHZ1</accession>
<reference key="1">
    <citation type="journal article" date="2005" name="Nature">
        <title>Genomic sequence of the pathogenic and allergenic filamentous fungus Aspergillus fumigatus.</title>
        <authorList>
            <person name="Nierman W.C."/>
            <person name="Pain A."/>
            <person name="Anderson M.J."/>
            <person name="Wortman J.R."/>
            <person name="Kim H.S."/>
            <person name="Arroyo J."/>
            <person name="Berriman M."/>
            <person name="Abe K."/>
            <person name="Archer D.B."/>
            <person name="Bermejo C."/>
            <person name="Bennett J.W."/>
            <person name="Bowyer P."/>
            <person name="Chen D."/>
            <person name="Collins M."/>
            <person name="Coulsen R."/>
            <person name="Davies R."/>
            <person name="Dyer P.S."/>
            <person name="Farman M.L."/>
            <person name="Fedorova N."/>
            <person name="Fedorova N.D."/>
            <person name="Feldblyum T.V."/>
            <person name="Fischer R."/>
            <person name="Fosker N."/>
            <person name="Fraser A."/>
            <person name="Garcia J.L."/>
            <person name="Garcia M.J."/>
            <person name="Goble A."/>
            <person name="Goldman G.H."/>
            <person name="Gomi K."/>
            <person name="Griffith-Jones S."/>
            <person name="Gwilliam R."/>
            <person name="Haas B.J."/>
            <person name="Haas H."/>
            <person name="Harris D.E."/>
            <person name="Horiuchi H."/>
            <person name="Huang J."/>
            <person name="Humphray S."/>
            <person name="Jimenez J."/>
            <person name="Keller N."/>
            <person name="Khouri H."/>
            <person name="Kitamoto K."/>
            <person name="Kobayashi T."/>
            <person name="Konzack S."/>
            <person name="Kulkarni R."/>
            <person name="Kumagai T."/>
            <person name="Lafton A."/>
            <person name="Latge J.-P."/>
            <person name="Li W."/>
            <person name="Lord A."/>
            <person name="Lu C."/>
            <person name="Majoros W.H."/>
            <person name="May G.S."/>
            <person name="Miller B.L."/>
            <person name="Mohamoud Y."/>
            <person name="Molina M."/>
            <person name="Monod M."/>
            <person name="Mouyna I."/>
            <person name="Mulligan S."/>
            <person name="Murphy L.D."/>
            <person name="O'Neil S."/>
            <person name="Paulsen I."/>
            <person name="Penalva M.A."/>
            <person name="Pertea M."/>
            <person name="Price C."/>
            <person name="Pritchard B.L."/>
            <person name="Quail M.A."/>
            <person name="Rabbinowitsch E."/>
            <person name="Rawlins N."/>
            <person name="Rajandream M.A."/>
            <person name="Reichard U."/>
            <person name="Renauld H."/>
            <person name="Robson G.D."/>
            <person name="Rodriguez de Cordoba S."/>
            <person name="Rodriguez-Pena J.M."/>
            <person name="Ronning C.M."/>
            <person name="Rutter S."/>
            <person name="Salzberg S.L."/>
            <person name="Sanchez M."/>
            <person name="Sanchez-Ferrero J.C."/>
            <person name="Saunders D."/>
            <person name="Seeger K."/>
            <person name="Squares R."/>
            <person name="Squares S."/>
            <person name="Takeuchi M."/>
            <person name="Tekaia F."/>
            <person name="Turner G."/>
            <person name="Vazquez de Aldana C.R."/>
            <person name="Weidman J."/>
            <person name="White O."/>
            <person name="Woodward J.R."/>
            <person name="Yu J.-H."/>
            <person name="Fraser C.M."/>
            <person name="Galagan J.E."/>
            <person name="Asai K."/>
            <person name="Machida M."/>
            <person name="Hall N."/>
            <person name="Barrell B.G."/>
            <person name="Denning D.W."/>
        </authorList>
    </citation>
    <scope>NUCLEOTIDE SEQUENCE [LARGE SCALE GENOMIC DNA]</scope>
    <source>
        <strain>ATCC MYA-4609 / CBS 101355 / FGSC A1100 / Af293</strain>
    </source>
</reference>
<reference key="2">
    <citation type="journal article" date="2005" name="Med. Mycol.">
        <title>The ergosterol biosynthesis pathway, transporter genes, and azole resistance in Aspergillus fumigatus.</title>
        <authorList>
            <person name="Ferreira M.E."/>
            <person name="Colombo A.L."/>
            <person name="Paulsen I."/>
            <person name="Ren Q."/>
            <person name="Wortman J."/>
            <person name="Huang J."/>
            <person name="Goldman M.H."/>
            <person name="Goldman G.H."/>
        </authorList>
    </citation>
    <scope>IDENTIFICATION</scope>
    <scope>FUNCTION</scope>
</reference>
<reference key="3">
    <citation type="journal article" date="2012" name="Proc. Natl. Acad. Sci. U.S.A.">
        <title>Mevalonate governs interdependency of ergosterol and siderophore biosyntheses in the fungal pathogen Aspergillus fumigatus.</title>
        <authorList>
            <person name="Yasmin S."/>
            <person name="Alcazar-Fuoli L."/>
            <person name="Gruendlinger M."/>
            <person name="Puempel T."/>
            <person name="Cairns T."/>
            <person name="Blatzer M."/>
            <person name="Lopez J.F."/>
            <person name="Grimalt J.O."/>
            <person name="Bignell E."/>
            <person name="Haas H."/>
        </authorList>
    </citation>
    <scope>FUNCTION</scope>
    <scope>INDUCTION</scope>
</reference>
<reference key="4">
    <citation type="journal article" date="2017" name="Proc. R. Soc. B">
        <title>Evolution of cross-resistance to medical triazoles in Aspergillus fumigatus through selection pressure of environmental fungicides.</title>
        <authorList>
            <person name="Zhang J."/>
            <person name="van den Heuvel J."/>
            <person name="Debets A.J.M."/>
            <person name="Verweij P.E."/>
            <person name="Melchers W.J.G."/>
            <person name="Zwaan B.J."/>
            <person name="Schoustra S.E."/>
        </authorList>
    </citation>
    <scope>MUTAGENESIS OF PRO-320</scope>
</reference>
<reference key="5">
    <citation type="journal article" date="2019" name="MBio">
        <title>Mutations in hmg1, challenging the paradigm of clinical triazole resistance in Aspergillus fumigatus.</title>
        <authorList>
            <person name="Rybak J.M."/>
            <person name="Ge W."/>
            <person name="Wiederhold N.P."/>
            <person name="Parker J.E."/>
            <person name="Kelly S.L."/>
            <person name="Rogers P.D."/>
            <person name="Fortwendel J.R."/>
        </authorList>
    </citation>
    <scope>FUNCTION</scope>
    <scope>MUTAGENESIS OF PHE-262; SER-305 AND ILE-412</scope>
</reference>
<proteinExistence type="evidence at protein level"/>
<comment type="function">
    <text evidence="7 9 13 14">HMG-CoA reductase; part of the first module of ergosterol biosynthesis pathway that includes the early steps of the pathway, conserved across all eukaryotes, and which results in the formation of mevalonate from acetyl-coenzyme A (acetyl-CoA) (PubMed:22106303, PubMed:30940706). Hmg1 and hmg2 catalyze the reduction of hydroxymethylglutaryl-CoA (HMG-CoA) to mevalonate (Probable) (PubMed:22106303). The first module starts with the action of the cytosolic acetyl-CoA acetyltransferase erg10B that catalyzes the formation of acetoacetyl-CoA. The hydroxymethylglutaryl-CoA synthases erg13A and erg13B then condense acetyl-CoA with acetoacetyl-CoA to form HMG-CoA. The rate-limiting step of the early module is the reduction to mevalonate by the 3-hydroxy-3-methylglutaryl-coenzyme A (HMG-CoA) reductases hmg1 and hmg2. Mevalonate is also a precursor for the extracellular siderophore triacetylfusarinine C (TAFC) (Probable) (PubMed:16110826, PubMed:22106303).</text>
</comment>
<comment type="catalytic activity">
    <reaction evidence="5 14">
        <text>(R)-mevalonate + 2 NADP(+) + CoA = (3S)-3-hydroxy-3-methylglutaryl-CoA + 2 NADPH + 2 H(+)</text>
        <dbReference type="Rhea" id="RHEA:15989"/>
        <dbReference type="ChEBI" id="CHEBI:15378"/>
        <dbReference type="ChEBI" id="CHEBI:36464"/>
        <dbReference type="ChEBI" id="CHEBI:43074"/>
        <dbReference type="ChEBI" id="CHEBI:57287"/>
        <dbReference type="ChEBI" id="CHEBI:57783"/>
        <dbReference type="ChEBI" id="CHEBI:58349"/>
        <dbReference type="EC" id="1.1.1.34"/>
    </reaction>
    <physiologicalReaction direction="right-to-left" evidence="14">
        <dbReference type="Rhea" id="RHEA:15991"/>
    </physiologicalReaction>
</comment>
<comment type="pathway">
    <text evidence="7">Metabolic intermediate biosynthesis; (R)-mevalonate biosynthesis; (R)-mevalonate from acetyl-CoA: step 3/3.</text>
</comment>
<comment type="subcellular location">
    <subcellularLocation>
        <location evidence="12">Endoplasmic reticulum membrane</location>
        <topology evidence="2">Multi-pass membrane protein</topology>
    </subcellularLocation>
</comment>
<comment type="induction">
    <text evidence="7">Expression is induced during iron starvation.</text>
</comment>
<comment type="miscellaneous">
    <text evidence="8 9">Mutations of Phe-262, Ser-305, Pro-320 or Ile-412 are associated to acquired resistance to azoles, clinical drugs used to inhibit the activity and kill Aspergillus fumigatus cells during infections.</text>
</comment>
<comment type="similarity">
    <text evidence="12">Belongs to the HMG-CoA reductase family.</text>
</comment>
<sequence>MATSLITRKLRSAEATNDVEPGWLKRQVTGVLQSISSHACQHPIHTIVVIALLASTTYVGLLEGSLFDSVRNSRNIAGQVDVDTLLQGSRNLRLGESTSWKWQVEDSLASQDYTGVNHLALTTFIFSDSLSKSSSIAPAATELPIPSNASAQPVPFTPNLFSPFSHDSSLAFTLPFDQVPQFLKAVQEIPDTSSDEDDGEQKKWIMRAARGSAYGSGGAIKLWLADAWGSFVDLIKHAETIDIVIMTLGYLSMHLSFVSLFFSMRRLGSNFWLAATVLFSGVFAFLFGLLVTTKLGVPINVLLLSEGLPFLVVTIGFEKPIILTRAVLTAAADNRGRAGQASSSTTKSIQDSIQTAIKEQGFEIIRDYCIEIAILIAGAASGVQGGLRQFCFLAAWILFFDCVLLFTFYTTILCIKLEINRIKRHITLRKALEEDGITHRVAENVASSNDWPLTESESSNKTSIFGRKLRSSSVRRFKILMVGGFVLVNVVNLSTIPFRDSSQGAGLPLLSRVSNVFAPTPIDPFKVAENGLDSIYVSAKSQMMETVVTVIPPIKYKLEYPSVYYAALGESRTFDIEYTDQFLDAVGGRVIESLLKSIEDPIISKWIIAALTLSIILNGYLFNAARWSIKEPEVAPVPAAPTVAVVEAKKEYPKIDLNPDTPKRSLEECEAFLKEKRAAYLSDEELIELSLRGKIPGYALEKTMENEDLMSRVDAFTRAVKIRRAVVARTPATSAITGSLECSKLPYKDYNYTLVHGACCENVIGYLPLPLGVAGPLTIDGQSYFIPMATTEGVLVASTSRGAKAINAGGGAVTVLTGDGMTRGPCVGFPTLARAAAAKVWIDSEEGRSILTAAFNSTSRFARLQHLKTALAGTYLYIRFKTTTGDAMGMNMISKGVEKALHVMATECGFDDMATISVSGNFCTDKKAAAINWIDGRGKSVVAEAIIPGDVVRSVLKSDVNALVELNTSKNLIGSAMAGSVGGFNAHASNIVTAVFLATGQDPAQNVESSSCITTMRNLNGNLQIAVSMPSIEVGTIGGGTILEAQSAMLDMLGVRGSHPTNPGDNARQLARIVAAAVLAGELSLCSALAAGHLVRAHMAHNRSAATTRTSTPVSAAVSAARGLTMSSSE</sequence>
<dbReference type="EC" id="1.1.1.34" evidence="14"/>
<dbReference type="EMBL" id="AAHF01000008">
    <property type="protein sequence ID" value="EAL87464.1"/>
    <property type="molecule type" value="Genomic_DNA"/>
</dbReference>
<dbReference type="RefSeq" id="XP_749502.1">
    <property type="nucleotide sequence ID" value="XM_744409.1"/>
</dbReference>
<dbReference type="SMR" id="Q4WHZ1"/>
<dbReference type="FunCoup" id="Q4WHZ1">
    <property type="interactions" value="296"/>
</dbReference>
<dbReference type="STRING" id="330879.Q4WHZ1"/>
<dbReference type="GlyCosmos" id="Q4WHZ1">
    <property type="glycosylation" value="1 site, No reported glycans"/>
</dbReference>
<dbReference type="EnsemblFungi" id="EAL87464">
    <property type="protein sequence ID" value="EAL87464"/>
    <property type="gene ID" value="AFUA_2G03700"/>
</dbReference>
<dbReference type="GeneID" id="3506671"/>
<dbReference type="KEGG" id="afm:AFUA_2G03700"/>
<dbReference type="VEuPathDB" id="FungiDB:Afu2g03700"/>
<dbReference type="eggNOG" id="KOG2480">
    <property type="taxonomic scope" value="Eukaryota"/>
</dbReference>
<dbReference type="HOGENOM" id="CLU_001734_0_0_1"/>
<dbReference type="InParanoid" id="Q4WHZ1"/>
<dbReference type="OMA" id="KKWIMRA"/>
<dbReference type="OrthoDB" id="310654at2759"/>
<dbReference type="UniPathway" id="UPA00058">
    <property type="reaction ID" value="UER00103"/>
</dbReference>
<dbReference type="Proteomes" id="UP000002530">
    <property type="component" value="Chromosome 2"/>
</dbReference>
<dbReference type="GO" id="GO:0005789">
    <property type="term" value="C:endoplasmic reticulum membrane"/>
    <property type="evidence" value="ECO:0000318"/>
    <property type="project" value="GO_Central"/>
</dbReference>
<dbReference type="GO" id="GO:0005778">
    <property type="term" value="C:peroxisomal membrane"/>
    <property type="evidence" value="ECO:0000318"/>
    <property type="project" value="GO_Central"/>
</dbReference>
<dbReference type="GO" id="GO:0004420">
    <property type="term" value="F:hydroxymethylglutaryl-CoA reductase (NADPH) activity"/>
    <property type="evidence" value="ECO:0000318"/>
    <property type="project" value="GO_Central"/>
</dbReference>
<dbReference type="GO" id="GO:0015936">
    <property type="term" value="P:coenzyme A metabolic process"/>
    <property type="evidence" value="ECO:0007669"/>
    <property type="project" value="InterPro"/>
</dbReference>
<dbReference type="GO" id="GO:0006696">
    <property type="term" value="P:ergosterol biosynthetic process"/>
    <property type="evidence" value="ECO:0000318"/>
    <property type="project" value="GO_Central"/>
</dbReference>
<dbReference type="GO" id="GO:0008299">
    <property type="term" value="P:isoprenoid biosynthetic process"/>
    <property type="evidence" value="ECO:0000318"/>
    <property type="project" value="GO_Central"/>
</dbReference>
<dbReference type="GO" id="GO:1900551">
    <property type="term" value="P:N',N'',N'''-triacetylfusarinine C biosynthetic process"/>
    <property type="evidence" value="ECO:0000315"/>
    <property type="project" value="AspGD"/>
</dbReference>
<dbReference type="CDD" id="cd00643">
    <property type="entry name" value="HMG-CoA_reductase_classI"/>
    <property type="match status" value="1"/>
</dbReference>
<dbReference type="FunFam" id="1.10.3270.10:FF:000001">
    <property type="entry name" value="3-hydroxy-3-methylglutaryl coenzyme A reductase"/>
    <property type="match status" value="1"/>
</dbReference>
<dbReference type="FunFam" id="3.30.70.420:FF:000001">
    <property type="entry name" value="3-hydroxy-3-methylglutaryl coenzyme A reductase"/>
    <property type="match status" value="1"/>
</dbReference>
<dbReference type="FunFam" id="3.90.770.10:FF:000001">
    <property type="entry name" value="3-hydroxy-3-methylglutaryl coenzyme A reductase"/>
    <property type="match status" value="1"/>
</dbReference>
<dbReference type="Gene3D" id="3.90.770.10">
    <property type="entry name" value="3-hydroxy-3-methylglutaryl-coenzyme A Reductase, Chain A, domain 2"/>
    <property type="match status" value="1"/>
</dbReference>
<dbReference type="Gene3D" id="1.10.3270.10">
    <property type="entry name" value="HMGR, N-terminal domain"/>
    <property type="match status" value="1"/>
</dbReference>
<dbReference type="Gene3D" id="3.30.70.420">
    <property type="entry name" value="Hydroxymethylglutaryl-CoA reductase, class I/II, NAD/NADP-binding domain"/>
    <property type="match status" value="1"/>
</dbReference>
<dbReference type="InterPro" id="IPR025583">
    <property type="entry name" value="HMG-CoA_N_dom"/>
</dbReference>
<dbReference type="InterPro" id="IPR002202">
    <property type="entry name" value="HMG_CoA_Rdtase"/>
</dbReference>
<dbReference type="InterPro" id="IPR023074">
    <property type="entry name" value="HMG_CoA_Rdtase_cat_sf"/>
</dbReference>
<dbReference type="InterPro" id="IPR023076">
    <property type="entry name" value="HMG_CoA_Rdtase_CS"/>
</dbReference>
<dbReference type="InterPro" id="IPR004554">
    <property type="entry name" value="HMG_CoA_Rdtase_eu_arc"/>
</dbReference>
<dbReference type="InterPro" id="IPR023282">
    <property type="entry name" value="HMG_CoA_Rdtase_N"/>
</dbReference>
<dbReference type="InterPro" id="IPR009023">
    <property type="entry name" value="HMG_CoA_Rdtase_NAD(P)-bd_sf"/>
</dbReference>
<dbReference type="InterPro" id="IPR009029">
    <property type="entry name" value="HMG_CoA_Rdtase_sub-bd_dom_sf"/>
</dbReference>
<dbReference type="InterPro" id="IPR053958">
    <property type="entry name" value="HMGCR/SNAP/NPC1-like_SSD"/>
</dbReference>
<dbReference type="InterPro" id="IPR000731">
    <property type="entry name" value="SSD"/>
</dbReference>
<dbReference type="NCBIfam" id="TIGR00533">
    <property type="entry name" value="HMG_CoA_R_NADP"/>
    <property type="match status" value="1"/>
</dbReference>
<dbReference type="PANTHER" id="PTHR10572">
    <property type="entry name" value="3-HYDROXY-3-METHYLGLUTARYL-COENZYME A REDUCTASE"/>
    <property type="match status" value="1"/>
</dbReference>
<dbReference type="PANTHER" id="PTHR10572:SF24">
    <property type="entry name" value="3-HYDROXY-3-METHYLGLUTARYL-COENZYME A REDUCTASE"/>
    <property type="match status" value="1"/>
</dbReference>
<dbReference type="Pfam" id="PF00368">
    <property type="entry name" value="HMG-CoA_red"/>
    <property type="match status" value="1"/>
</dbReference>
<dbReference type="Pfam" id="PF13323">
    <property type="entry name" value="HPIH"/>
    <property type="match status" value="1"/>
</dbReference>
<dbReference type="Pfam" id="PF12349">
    <property type="entry name" value="Sterol-sensing"/>
    <property type="match status" value="1"/>
</dbReference>
<dbReference type="PRINTS" id="PR00071">
    <property type="entry name" value="HMGCOARDTASE"/>
</dbReference>
<dbReference type="SUPFAM" id="SSF55035">
    <property type="entry name" value="NAD-binding domain of HMG-CoA reductase"/>
    <property type="match status" value="1"/>
</dbReference>
<dbReference type="SUPFAM" id="SSF56542">
    <property type="entry name" value="Substrate-binding domain of HMG-CoA reductase"/>
    <property type="match status" value="1"/>
</dbReference>
<dbReference type="PROSITE" id="PS00066">
    <property type="entry name" value="HMG_COA_REDUCTASE_1"/>
    <property type="match status" value="1"/>
</dbReference>
<dbReference type="PROSITE" id="PS00318">
    <property type="entry name" value="HMG_COA_REDUCTASE_2"/>
    <property type="match status" value="1"/>
</dbReference>
<dbReference type="PROSITE" id="PS01192">
    <property type="entry name" value="HMG_COA_REDUCTASE_3"/>
    <property type="match status" value="1"/>
</dbReference>
<dbReference type="PROSITE" id="PS50065">
    <property type="entry name" value="HMG_COA_REDUCTASE_4"/>
    <property type="match status" value="1"/>
</dbReference>
<dbReference type="PROSITE" id="PS50156">
    <property type="entry name" value="SSD"/>
    <property type="match status" value="1"/>
</dbReference>
<evidence type="ECO:0000250" key="1">
    <source>
        <dbReference type="UniProtKB" id="P04035"/>
    </source>
</evidence>
<evidence type="ECO:0000255" key="2"/>
<evidence type="ECO:0000255" key="3">
    <source>
        <dbReference type="PROSITE-ProRule" id="PRU00199"/>
    </source>
</evidence>
<evidence type="ECO:0000255" key="4">
    <source>
        <dbReference type="PROSITE-ProRule" id="PRU00498"/>
    </source>
</evidence>
<evidence type="ECO:0000255" key="5">
    <source>
        <dbReference type="PROSITE-ProRule" id="PRU10003"/>
    </source>
</evidence>
<evidence type="ECO:0000256" key="6">
    <source>
        <dbReference type="SAM" id="MobiDB-lite"/>
    </source>
</evidence>
<evidence type="ECO:0000269" key="7">
    <source>
    </source>
</evidence>
<evidence type="ECO:0000269" key="8">
    <source>
    </source>
</evidence>
<evidence type="ECO:0000269" key="9">
    <source>
    </source>
</evidence>
<evidence type="ECO:0000303" key="10">
    <source>
    </source>
</evidence>
<evidence type="ECO:0000303" key="11">
    <source>
    </source>
</evidence>
<evidence type="ECO:0000305" key="12"/>
<evidence type="ECO:0000305" key="13">
    <source>
    </source>
</evidence>
<evidence type="ECO:0000305" key="14">
    <source>
    </source>
</evidence>
<organism>
    <name type="scientific">Aspergillus fumigatus (strain ATCC MYA-4609 / CBS 101355 / FGSC A1100 / Af293)</name>
    <name type="common">Neosartorya fumigata</name>
    <dbReference type="NCBI Taxonomy" id="330879"/>
    <lineage>
        <taxon>Eukaryota</taxon>
        <taxon>Fungi</taxon>
        <taxon>Dikarya</taxon>
        <taxon>Ascomycota</taxon>
        <taxon>Pezizomycotina</taxon>
        <taxon>Eurotiomycetes</taxon>
        <taxon>Eurotiomycetidae</taxon>
        <taxon>Eurotiales</taxon>
        <taxon>Aspergillaceae</taxon>
        <taxon>Aspergillus</taxon>
        <taxon>Aspergillus subgen. Fumigati</taxon>
    </lineage>
</organism>
<protein>
    <recommendedName>
        <fullName evidence="11">3-hydroxy-3-methylglutaryl-coenzyme A reductase 1</fullName>
        <shortName evidence="11">HMG-CoA reductase 1</shortName>
        <ecNumber evidence="14">1.1.1.34</ecNumber>
    </recommendedName>
    <alternativeName>
        <fullName evidence="10">Ergosterol biosynthesis protein hmg1</fullName>
    </alternativeName>
</protein>
<gene>
    <name evidence="11" type="primary">hmg1</name>
    <name type="ORF">AFUA_2G03700</name>
</gene>
<name>HMDH1_ASPFU</name>
<feature type="chain" id="PRO_0000454150" description="3-hydroxy-3-methylglutaryl-coenzyme A reductase 1">
    <location>
        <begin position="1"/>
        <end position="1130"/>
    </location>
</feature>
<feature type="topological domain" description="Cytoplasmic" evidence="12">
    <location>
        <begin position="1"/>
        <end position="46"/>
    </location>
</feature>
<feature type="transmembrane region" description="Helical" evidence="2">
    <location>
        <begin position="47"/>
        <end position="67"/>
    </location>
</feature>
<feature type="topological domain" description="Lumenal" evidence="12">
    <location>
        <begin position="68"/>
        <end position="242"/>
    </location>
</feature>
<feature type="transmembrane region" description="Helical" evidence="2">
    <location>
        <begin position="243"/>
        <end position="263"/>
    </location>
</feature>
<feature type="topological domain" description="Cytoplasmic" evidence="12">
    <location>
        <begin position="264"/>
        <end position="270"/>
    </location>
</feature>
<feature type="transmembrane region" description="Helical" evidence="2">
    <location>
        <begin position="271"/>
        <end position="291"/>
    </location>
</feature>
<feature type="topological domain" description="Lumenal" evidence="12">
    <location>
        <begin position="292"/>
        <end position="296"/>
    </location>
</feature>
<feature type="transmembrane region" description="Helical" evidence="2">
    <location>
        <begin position="297"/>
        <end position="317"/>
    </location>
</feature>
<feature type="topological domain" description="Cytoplasmic" evidence="12">
    <location>
        <begin position="318"/>
        <end position="366"/>
    </location>
</feature>
<feature type="transmembrane region" description="Helical" evidence="2">
    <location>
        <begin position="367"/>
        <end position="387"/>
    </location>
</feature>
<feature type="topological domain" description="Lumenal" evidence="12">
    <location>
        <begin position="388"/>
        <end position="389"/>
    </location>
</feature>
<feature type="transmembrane region" description="Helical" evidence="2">
    <location>
        <begin position="390"/>
        <end position="410"/>
    </location>
</feature>
<feature type="topological domain" description="Cytoplasmic" evidence="12">
    <location>
        <begin position="411"/>
        <end position="476"/>
    </location>
</feature>
<feature type="transmembrane region" description="Helical" evidence="2">
    <location>
        <begin position="477"/>
        <end position="497"/>
    </location>
</feature>
<feature type="topological domain" description="Lumenal" evidence="12">
    <location>
        <begin position="498"/>
        <end position="601"/>
    </location>
</feature>
<feature type="transmembrane region" description="Helical" evidence="2">
    <location>
        <begin position="602"/>
        <end position="622"/>
    </location>
</feature>
<feature type="topological domain" description="Cytoplasmic" evidence="12">
    <location>
        <begin position="623"/>
        <end position="1130"/>
    </location>
</feature>
<feature type="domain" description="SSD" evidence="3">
    <location>
        <begin position="242"/>
        <end position="415"/>
    </location>
</feature>
<feature type="region of interest" description="Disordered" evidence="6">
    <location>
        <begin position="1103"/>
        <end position="1130"/>
    </location>
</feature>
<feature type="compositionally biased region" description="Low complexity" evidence="6">
    <location>
        <begin position="1103"/>
        <end position="1122"/>
    </location>
</feature>
<feature type="active site" description="Charge relay system" evidence="1">
    <location>
        <position position="792"/>
    </location>
</feature>
<feature type="active site" description="Charge relay system" evidence="1">
    <location>
        <position position="926"/>
    </location>
</feature>
<feature type="active site" description="Charge relay system" evidence="1">
    <location>
        <position position="1002"/>
    </location>
</feature>
<feature type="active site" description="Proton donor" evidence="5">
    <location>
        <position position="1098"/>
    </location>
</feature>
<feature type="binding site" evidence="1">
    <location>
        <begin position="798"/>
        <end position="804"/>
    </location>
    <ligand>
        <name>CoA</name>
        <dbReference type="ChEBI" id="CHEBI:57287"/>
    </ligand>
</feature>
<feature type="binding site" evidence="1">
    <location>
        <begin position="859"/>
        <end position="861"/>
    </location>
    <ligand>
        <name>NADP(+)</name>
        <dbReference type="ChEBI" id="CHEBI:58349"/>
    </ligand>
</feature>
<feature type="binding site" evidence="1">
    <location>
        <begin position="886"/>
        <end position="894"/>
    </location>
    <ligand>
        <name>NADP(+)</name>
        <dbReference type="ChEBI" id="CHEBI:58349"/>
    </ligand>
</feature>
<feature type="binding site" evidence="1">
    <location>
        <begin position="955"/>
        <end position="957"/>
    </location>
    <ligand>
        <name>CoA</name>
        <dbReference type="ChEBI" id="CHEBI:57287"/>
    </ligand>
</feature>
<feature type="binding site" evidence="1">
    <location>
        <begin position="1097"/>
        <end position="1098"/>
    </location>
    <ligand>
        <name>CoA</name>
        <dbReference type="ChEBI" id="CHEBI:57287"/>
    </ligand>
</feature>
<feature type="binding site" evidence="1">
    <location>
        <begin position="1102"/>
        <end position="1103"/>
    </location>
    <ligand>
        <name>NADP(+)</name>
        <dbReference type="ChEBI" id="CHEBI:58349"/>
    </ligand>
</feature>
<feature type="glycosylation site" description="N-linked (GlcNAc...) asparagine" evidence="4">
    <location>
        <position position="148"/>
    </location>
</feature>
<feature type="mutagenesis site" description="Contributes to acquired resistance to azoles." evidence="9">
    <location>
        <position position="262"/>
    </location>
</feature>
<feature type="mutagenesis site" description="Contributes to acquired resistance to azoles." evidence="9">
    <original>S</original>
    <variation>P</variation>
    <location>
        <position position="305"/>
    </location>
</feature>
<feature type="mutagenesis site" description="Contributes to acquired resistance to azoles." evidence="8">
    <original>P</original>
    <variation>L</variation>
    <location>
        <position position="320"/>
    </location>
</feature>
<feature type="mutagenesis site" description="Contributes to acquired resistance to azoles." evidence="9">
    <original>I</original>
    <variation>S</variation>
    <location>
        <position position="412"/>
    </location>
</feature>
<keyword id="KW-0256">Endoplasmic reticulum</keyword>
<keyword id="KW-0325">Glycoprotein</keyword>
<keyword id="KW-0444">Lipid biosynthesis</keyword>
<keyword id="KW-0443">Lipid metabolism</keyword>
<keyword id="KW-0472">Membrane</keyword>
<keyword id="KW-0521">NADP</keyword>
<keyword id="KW-0560">Oxidoreductase</keyword>
<keyword id="KW-1185">Reference proteome</keyword>
<keyword id="KW-0752">Steroid biosynthesis</keyword>
<keyword id="KW-0753">Steroid metabolism</keyword>
<keyword id="KW-0756">Sterol biosynthesis</keyword>
<keyword id="KW-1207">Sterol metabolism</keyword>
<keyword id="KW-0812">Transmembrane</keyword>
<keyword id="KW-1133">Transmembrane helix</keyword>